<comment type="function">
    <text evidence="1">Specifically methylates the pseudouridine at position 1915 (m3Psi1915) in 23S rRNA.</text>
</comment>
<comment type="catalytic activity">
    <reaction evidence="1">
        <text>pseudouridine(1915) in 23S rRNA + S-adenosyl-L-methionine = N(3)-methylpseudouridine(1915) in 23S rRNA + S-adenosyl-L-homocysteine + H(+)</text>
        <dbReference type="Rhea" id="RHEA:42752"/>
        <dbReference type="Rhea" id="RHEA-COMP:10221"/>
        <dbReference type="Rhea" id="RHEA-COMP:10222"/>
        <dbReference type="ChEBI" id="CHEBI:15378"/>
        <dbReference type="ChEBI" id="CHEBI:57856"/>
        <dbReference type="ChEBI" id="CHEBI:59789"/>
        <dbReference type="ChEBI" id="CHEBI:65314"/>
        <dbReference type="ChEBI" id="CHEBI:74486"/>
        <dbReference type="EC" id="2.1.1.177"/>
    </reaction>
</comment>
<comment type="subunit">
    <text evidence="1">Homodimer.</text>
</comment>
<comment type="subcellular location">
    <subcellularLocation>
        <location evidence="1">Cytoplasm</location>
    </subcellularLocation>
</comment>
<comment type="similarity">
    <text evidence="1">Belongs to the RNA methyltransferase RlmH family.</text>
</comment>
<protein>
    <recommendedName>
        <fullName evidence="1">Ribosomal RNA large subunit methyltransferase H</fullName>
        <ecNumber evidence="1">2.1.1.177</ecNumber>
    </recommendedName>
    <alternativeName>
        <fullName evidence="1">23S rRNA (pseudouridine1915-N3)-methyltransferase</fullName>
    </alternativeName>
    <alternativeName>
        <fullName evidence="1">23S rRNA m3Psi1915 methyltransferase</fullName>
    </alternativeName>
    <alternativeName>
        <fullName evidence="1">rRNA (pseudouridine-N3-)-methyltransferase RlmH</fullName>
    </alternativeName>
</protein>
<organism>
    <name type="scientific">Prochlorococcus marinus subsp. pastoris (strain CCMP1986 / NIES-2087 / MED4)</name>
    <dbReference type="NCBI Taxonomy" id="59919"/>
    <lineage>
        <taxon>Bacteria</taxon>
        <taxon>Bacillati</taxon>
        <taxon>Cyanobacteriota</taxon>
        <taxon>Cyanophyceae</taxon>
        <taxon>Synechococcales</taxon>
        <taxon>Prochlorococcaceae</taxon>
        <taxon>Prochlorococcus</taxon>
    </lineage>
</organism>
<keyword id="KW-0963">Cytoplasm</keyword>
<keyword id="KW-0489">Methyltransferase</keyword>
<keyword id="KW-0698">rRNA processing</keyword>
<keyword id="KW-0949">S-adenosyl-L-methionine</keyword>
<keyword id="KW-0808">Transferase</keyword>
<gene>
    <name evidence="1" type="primary">rlmH</name>
    <name type="ordered locus">PMM0935</name>
</gene>
<name>RLMH_PROMP</name>
<feature type="chain" id="PRO_0000198161" description="Ribosomal RNA large subunit methyltransferase H">
    <location>
        <begin position="1"/>
        <end position="137"/>
    </location>
</feature>
<feature type="binding site" evidence="1">
    <location>
        <position position="56"/>
    </location>
    <ligand>
        <name>S-adenosyl-L-methionine</name>
        <dbReference type="ChEBI" id="CHEBI:59789"/>
    </ligand>
</feature>
<feature type="binding site" evidence="1">
    <location>
        <position position="85"/>
    </location>
    <ligand>
        <name>S-adenosyl-L-methionine</name>
        <dbReference type="ChEBI" id="CHEBI:59789"/>
    </ligand>
</feature>
<feature type="binding site" evidence="1">
    <location>
        <begin position="104"/>
        <end position="109"/>
    </location>
    <ligand>
        <name>S-adenosyl-L-methionine</name>
        <dbReference type="ChEBI" id="CHEBI:59789"/>
    </ligand>
</feature>
<evidence type="ECO:0000255" key="1">
    <source>
        <dbReference type="HAMAP-Rule" id="MF_00658"/>
    </source>
</evidence>
<reference key="1">
    <citation type="journal article" date="2003" name="Nature">
        <title>Genome divergence in two Prochlorococcus ecotypes reflects oceanic niche differentiation.</title>
        <authorList>
            <person name="Rocap G."/>
            <person name="Larimer F.W."/>
            <person name="Lamerdin J.E."/>
            <person name="Malfatti S."/>
            <person name="Chain P."/>
            <person name="Ahlgren N.A."/>
            <person name="Arellano A."/>
            <person name="Coleman M."/>
            <person name="Hauser L."/>
            <person name="Hess W.R."/>
            <person name="Johnson Z.I."/>
            <person name="Land M.L."/>
            <person name="Lindell D."/>
            <person name="Post A.F."/>
            <person name="Regala W."/>
            <person name="Shah M."/>
            <person name="Shaw S.L."/>
            <person name="Steglich C."/>
            <person name="Sullivan M.B."/>
            <person name="Ting C.S."/>
            <person name="Tolonen A."/>
            <person name="Webb E.A."/>
            <person name="Zinser E.R."/>
            <person name="Chisholm S.W."/>
        </authorList>
    </citation>
    <scope>NUCLEOTIDE SEQUENCE [LARGE SCALE GENOMIC DNA]</scope>
    <source>
        <strain>CCMP1986 / NIES-2087 / MED4</strain>
    </source>
</reference>
<sequence>MLQTNRLSINAIGKIKKNWIREGINQYKKRMPDLIINESKSFNIDNIRVNNIIICLTEEGQSFNSIELTSLLLNFKNKKINFLIGDADGIPSDIKDKSNLLLSLSPLTFPHELARLILIEQIYRAISISNNSPYHRA</sequence>
<proteinExistence type="inferred from homology"/>
<accession>Q7V1D9</accession>
<dbReference type="EC" id="2.1.1.177" evidence="1"/>
<dbReference type="EMBL" id="BX548174">
    <property type="protein sequence ID" value="CAE19394.1"/>
    <property type="molecule type" value="Genomic_DNA"/>
</dbReference>
<dbReference type="RefSeq" id="WP_011132568.1">
    <property type="nucleotide sequence ID" value="NC_005072.1"/>
</dbReference>
<dbReference type="SMR" id="Q7V1D9"/>
<dbReference type="STRING" id="59919.PMM0935"/>
<dbReference type="KEGG" id="pmm:PMM0935"/>
<dbReference type="eggNOG" id="COG1576">
    <property type="taxonomic scope" value="Bacteria"/>
</dbReference>
<dbReference type="HOGENOM" id="CLU_100552_2_0_3"/>
<dbReference type="OrthoDB" id="9806643at2"/>
<dbReference type="Proteomes" id="UP000001026">
    <property type="component" value="Chromosome"/>
</dbReference>
<dbReference type="GO" id="GO:0005737">
    <property type="term" value="C:cytoplasm"/>
    <property type="evidence" value="ECO:0007669"/>
    <property type="project" value="UniProtKB-SubCell"/>
</dbReference>
<dbReference type="GO" id="GO:0070038">
    <property type="term" value="F:rRNA (pseudouridine-N3-)-methyltransferase activity"/>
    <property type="evidence" value="ECO:0007669"/>
    <property type="project" value="UniProtKB-UniRule"/>
</dbReference>
<dbReference type="CDD" id="cd18081">
    <property type="entry name" value="RlmH-like"/>
    <property type="match status" value="1"/>
</dbReference>
<dbReference type="Gene3D" id="3.40.1280.10">
    <property type="match status" value="1"/>
</dbReference>
<dbReference type="HAMAP" id="MF_00658">
    <property type="entry name" value="23SrRNA_methyltr_H"/>
    <property type="match status" value="1"/>
</dbReference>
<dbReference type="InterPro" id="IPR029028">
    <property type="entry name" value="Alpha/beta_knot_MTases"/>
</dbReference>
<dbReference type="InterPro" id="IPR003742">
    <property type="entry name" value="RlmH-like"/>
</dbReference>
<dbReference type="InterPro" id="IPR029026">
    <property type="entry name" value="tRNA_m1G_MTases_N"/>
</dbReference>
<dbReference type="PANTHER" id="PTHR33603">
    <property type="entry name" value="METHYLTRANSFERASE"/>
    <property type="match status" value="1"/>
</dbReference>
<dbReference type="PANTHER" id="PTHR33603:SF1">
    <property type="entry name" value="RIBOSOMAL RNA LARGE SUBUNIT METHYLTRANSFERASE H"/>
    <property type="match status" value="1"/>
</dbReference>
<dbReference type="Pfam" id="PF02590">
    <property type="entry name" value="SPOUT_MTase"/>
    <property type="match status" value="1"/>
</dbReference>
<dbReference type="PIRSF" id="PIRSF004505">
    <property type="entry name" value="MT_bac"/>
    <property type="match status" value="1"/>
</dbReference>
<dbReference type="SUPFAM" id="SSF75217">
    <property type="entry name" value="alpha/beta knot"/>
    <property type="match status" value="1"/>
</dbReference>